<organism>
    <name type="scientific">Arabidopsis thaliana</name>
    <name type="common">Mouse-ear cress</name>
    <dbReference type="NCBI Taxonomy" id="3702"/>
    <lineage>
        <taxon>Eukaryota</taxon>
        <taxon>Viridiplantae</taxon>
        <taxon>Streptophyta</taxon>
        <taxon>Embryophyta</taxon>
        <taxon>Tracheophyta</taxon>
        <taxon>Spermatophyta</taxon>
        <taxon>Magnoliopsida</taxon>
        <taxon>eudicotyledons</taxon>
        <taxon>Gunneridae</taxon>
        <taxon>Pentapetalae</taxon>
        <taxon>rosids</taxon>
        <taxon>malvids</taxon>
        <taxon>Brassicales</taxon>
        <taxon>Brassicaceae</taxon>
        <taxon>Camelineae</taxon>
        <taxon>Arabidopsis</taxon>
    </lineage>
</organism>
<keyword id="KW-0150">Chloroplast</keyword>
<keyword id="KW-0479">Metal-binding</keyword>
<keyword id="KW-0560">Oxidoreductase</keyword>
<keyword id="KW-0934">Plastid</keyword>
<keyword id="KW-0630">Potassium</keyword>
<keyword id="KW-0670">Pyruvate</keyword>
<keyword id="KW-1185">Reference proteome</keyword>
<keyword id="KW-0786">Thiamine pyrophosphate</keyword>
<keyword id="KW-0809">Transit peptide</keyword>
<name>ODPB3_ARATH</name>
<dbReference type="EC" id="1.2.4.1"/>
<dbReference type="EMBL" id="AF167983">
    <property type="protein sequence ID" value="AAD47282.1"/>
    <property type="molecule type" value="mRNA"/>
</dbReference>
<dbReference type="EMBL" id="AC004077">
    <property type="protein sequence ID" value="AAC26685.1"/>
    <property type="molecule type" value="Genomic_DNA"/>
</dbReference>
<dbReference type="EMBL" id="CP002685">
    <property type="protein sequence ID" value="AEC08996.1"/>
    <property type="molecule type" value="Genomic_DNA"/>
</dbReference>
<dbReference type="EMBL" id="BT025968">
    <property type="protein sequence ID" value="ABG25057.1"/>
    <property type="molecule type" value="mRNA"/>
</dbReference>
<dbReference type="EMBL" id="AY087792">
    <property type="protein sequence ID" value="AAM65328.1"/>
    <property type="molecule type" value="mRNA"/>
</dbReference>
<dbReference type="PIR" id="E84758">
    <property type="entry name" value="E84758"/>
</dbReference>
<dbReference type="RefSeq" id="NP_181006.1">
    <property type="nucleotide sequence ID" value="NM_129013.3"/>
</dbReference>
<dbReference type="SMR" id="O64688"/>
<dbReference type="BioGRID" id="3370">
    <property type="interactions" value="18"/>
</dbReference>
<dbReference type="FunCoup" id="O64688">
    <property type="interactions" value="374"/>
</dbReference>
<dbReference type="IntAct" id="O64688">
    <property type="interactions" value="2"/>
</dbReference>
<dbReference type="STRING" id="3702.O64688"/>
<dbReference type="iPTMnet" id="O64688"/>
<dbReference type="PaxDb" id="3702-AT2G34590.1"/>
<dbReference type="ProteomicsDB" id="250792"/>
<dbReference type="EnsemblPlants" id="AT2G34590.1">
    <property type="protein sequence ID" value="AT2G34590.1"/>
    <property type="gene ID" value="AT2G34590"/>
</dbReference>
<dbReference type="GeneID" id="818024"/>
<dbReference type="Gramene" id="AT2G34590.1">
    <property type="protein sequence ID" value="AT2G34590.1"/>
    <property type="gene ID" value="AT2G34590"/>
</dbReference>
<dbReference type="KEGG" id="ath:AT2G34590"/>
<dbReference type="Araport" id="AT2G34590"/>
<dbReference type="TAIR" id="AT2G34590"/>
<dbReference type="eggNOG" id="KOG0524">
    <property type="taxonomic scope" value="Eukaryota"/>
</dbReference>
<dbReference type="HOGENOM" id="CLU_012907_1_1_1"/>
<dbReference type="InParanoid" id="O64688"/>
<dbReference type="OMA" id="PCHAGIT"/>
<dbReference type="OrthoDB" id="10266385at2759"/>
<dbReference type="PhylomeDB" id="O64688"/>
<dbReference type="BioCyc" id="ARA:AT2G34590-MONOMER"/>
<dbReference type="PRO" id="PR:O64688"/>
<dbReference type="Proteomes" id="UP000006548">
    <property type="component" value="Chromosome 2"/>
</dbReference>
<dbReference type="ExpressionAtlas" id="O64688">
    <property type="expression patterns" value="baseline and differential"/>
</dbReference>
<dbReference type="GO" id="GO:0009941">
    <property type="term" value="C:chloroplast envelope"/>
    <property type="evidence" value="ECO:0007005"/>
    <property type="project" value="TAIR"/>
</dbReference>
<dbReference type="GO" id="GO:0005783">
    <property type="term" value="C:endoplasmic reticulum"/>
    <property type="evidence" value="ECO:0007005"/>
    <property type="project" value="TAIR"/>
</dbReference>
<dbReference type="GO" id="GO:0004739">
    <property type="term" value="F:pyruvate dehydrogenase (acetyl-transferring) activity"/>
    <property type="evidence" value="ECO:0007669"/>
    <property type="project" value="UniProtKB-EC"/>
</dbReference>
<dbReference type="GO" id="GO:0008270">
    <property type="term" value="F:zinc ion binding"/>
    <property type="evidence" value="ECO:0007005"/>
    <property type="project" value="TAIR"/>
</dbReference>
<dbReference type="GO" id="GO:0048868">
    <property type="term" value="P:pollen tube development"/>
    <property type="evidence" value="ECO:0000315"/>
    <property type="project" value="TAIR"/>
</dbReference>
<dbReference type="CDD" id="cd07036">
    <property type="entry name" value="TPP_PYR_E1-PDHc-beta_like"/>
    <property type="match status" value="1"/>
</dbReference>
<dbReference type="FunFam" id="3.40.50.970:FF:000001">
    <property type="entry name" value="Pyruvate dehydrogenase E1 beta subunit"/>
    <property type="match status" value="1"/>
</dbReference>
<dbReference type="FunFam" id="3.40.50.920:FF:000006">
    <property type="entry name" value="Pyruvate dehydrogenase E1 component subunit beta"/>
    <property type="match status" value="1"/>
</dbReference>
<dbReference type="Gene3D" id="3.40.50.920">
    <property type="match status" value="1"/>
</dbReference>
<dbReference type="Gene3D" id="3.40.50.970">
    <property type="match status" value="1"/>
</dbReference>
<dbReference type="InterPro" id="IPR029061">
    <property type="entry name" value="THDP-binding"/>
</dbReference>
<dbReference type="InterPro" id="IPR009014">
    <property type="entry name" value="Transketo_C/PFOR_II"/>
</dbReference>
<dbReference type="InterPro" id="IPR005475">
    <property type="entry name" value="Transketolase-like_Pyr-bd"/>
</dbReference>
<dbReference type="InterPro" id="IPR033248">
    <property type="entry name" value="Transketolase_C"/>
</dbReference>
<dbReference type="NCBIfam" id="NF006667">
    <property type="entry name" value="PRK09212.1"/>
    <property type="match status" value="1"/>
</dbReference>
<dbReference type="PANTHER" id="PTHR43257">
    <property type="entry name" value="PYRUVATE DEHYDROGENASE E1 COMPONENT BETA SUBUNIT"/>
    <property type="match status" value="1"/>
</dbReference>
<dbReference type="PANTHER" id="PTHR43257:SF2">
    <property type="entry name" value="PYRUVATE DEHYDROGENASE E1 COMPONENT SUBUNIT BETA"/>
    <property type="match status" value="1"/>
</dbReference>
<dbReference type="Pfam" id="PF02779">
    <property type="entry name" value="Transket_pyr"/>
    <property type="match status" value="1"/>
</dbReference>
<dbReference type="Pfam" id="PF02780">
    <property type="entry name" value="Transketolase_C"/>
    <property type="match status" value="1"/>
</dbReference>
<dbReference type="SMART" id="SM00861">
    <property type="entry name" value="Transket_pyr"/>
    <property type="match status" value="1"/>
</dbReference>
<dbReference type="SUPFAM" id="SSF52518">
    <property type="entry name" value="Thiamin diphosphate-binding fold (THDP-binding)"/>
    <property type="match status" value="1"/>
</dbReference>
<dbReference type="SUPFAM" id="SSF52922">
    <property type="entry name" value="TK C-terminal domain-like"/>
    <property type="match status" value="1"/>
</dbReference>
<feature type="transit peptide" description="Chloroplast" evidence="3">
    <location>
        <begin position="1"/>
        <end position="70"/>
    </location>
</feature>
<feature type="chain" id="PRO_0000421372" description="Pyruvate dehydrogenase E1 component subunit beta-3, chloroplastic">
    <location>
        <begin position="71"/>
        <end position="406"/>
    </location>
</feature>
<feature type="binding site" evidence="2">
    <location>
        <position position="142"/>
    </location>
    <ligand>
        <name>thiamine diphosphate</name>
        <dbReference type="ChEBI" id="CHEBI:58937"/>
        <note>ligand shared with alpha subunit</note>
    </ligand>
</feature>
<feature type="binding site" evidence="2">
    <location>
        <position position="195"/>
    </location>
    <ligand>
        <name>K(+)</name>
        <dbReference type="ChEBI" id="CHEBI:29103"/>
        <note>structural</note>
    </ligand>
</feature>
<feature type="binding site" evidence="2">
    <location>
        <position position="243"/>
    </location>
    <ligand>
        <name>K(+)</name>
        <dbReference type="ChEBI" id="CHEBI:29103"/>
        <note>structural</note>
    </ligand>
</feature>
<feature type="binding site" evidence="2">
    <location>
        <position position="244"/>
    </location>
    <ligand>
        <name>K(+)</name>
        <dbReference type="ChEBI" id="CHEBI:29103"/>
        <note>structural</note>
    </ligand>
</feature>
<feature type="binding site" evidence="2">
    <location>
        <position position="248"/>
    </location>
    <ligand>
        <name>K(+)</name>
        <dbReference type="ChEBI" id="CHEBI:29103"/>
        <note>structural</note>
    </ligand>
</feature>
<feature type="sequence conflict" description="In Ref. 5; AAM65328." evidence="4" ref="5">
    <original>V</original>
    <variation>A</variation>
    <location>
        <position position="108"/>
    </location>
</feature>
<sequence length="406" mass="44015">MSAILQGAGAATALSPFNSIDSNKLVAPSRSSLSVRSKRYIVAGSDSKSFGSSLVARRSEPLIPNAVTTKADTAASSTSSKPGHELLLFEALQEGLEEEMDRDPHVCVMGEDVGHYGGSYKVTKGLADKFGDLRVLDTPICENAFTGMGIGAAMTGLRPVIEGMNMGFLLLAFNQISNNCGMLHYTSGGQFTIPVVIRGPGGVGRQLGAEHSQRLESYFQSIPGIQMVACSTPYNAKGLMKAAIRSENPVILFEHVLLYNLKESIPDEEYICNLEEAEMVRPGEHITILTYSRMRYHVMQAAKTLVNKGYDPEVIDIRSLKPFDLYTIGNSVKKTHRVLIVEECMRTGGIGASLTAAINENFHDYLDAPVMCLSSQDVPTPYAGTLEEWTVVQPAQIVTAVEQLCQ</sequence>
<proteinExistence type="evidence at protein level"/>
<protein>
    <recommendedName>
        <fullName>Pyruvate dehydrogenase E1 component subunit beta-3, chloroplastic</fullName>
        <ecNumber>1.2.4.1</ecNumber>
    </recommendedName>
</protein>
<accession>O64688</accession>
<accession>Q8LAI3</accession>
<evidence type="ECO:0000250" key="1"/>
<evidence type="ECO:0000250" key="2">
    <source>
        <dbReference type="UniProtKB" id="P11177"/>
    </source>
</evidence>
<evidence type="ECO:0000255" key="3"/>
<evidence type="ECO:0000305" key="4"/>
<gene>
    <name type="primary">E1-BETA-2</name>
    <name type="ordered locus">At2g34590</name>
    <name type="ORF">T31E10.7</name>
</gene>
<reference key="1">
    <citation type="online journal article" date="1999" name="Plant Gene Register">
        <title>A second gene encoding the plastidic pyruvate dehydrogenase beta subunit in Arabidopsis thaliana.</title>
        <authorList>
            <person name="Behal R.H."/>
            <person name="Oliver D.J."/>
        </authorList>
        <locator>PGR99-136</locator>
    </citation>
    <scope>NUCLEOTIDE SEQUENCE [MRNA]</scope>
</reference>
<reference key="2">
    <citation type="journal article" date="1999" name="Nature">
        <title>Sequence and analysis of chromosome 2 of the plant Arabidopsis thaliana.</title>
        <authorList>
            <person name="Lin X."/>
            <person name="Kaul S."/>
            <person name="Rounsley S.D."/>
            <person name="Shea T.P."/>
            <person name="Benito M.-I."/>
            <person name="Town C.D."/>
            <person name="Fujii C.Y."/>
            <person name="Mason T.M."/>
            <person name="Bowman C.L."/>
            <person name="Barnstead M.E."/>
            <person name="Feldblyum T.V."/>
            <person name="Buell C.R."/>
            <person name="Ketchum K.A."/>
            <person name="Lee J.J."/>
            <person name="Ronning C.M."/>
            <person name="Koo H.L."/>
            <person name="Moffat K.S."/>
            <person name="Cronin L.A."/>
            <person name="Shen M."/>
            <person name="Pai G."/>
            <person name="Van Aken S."/>
            <person name="Umayam L."/>
            <person name="Tallon L.J."/>
            <person name="Gill J.E."/>
            <person name="Adams M.D."/>
            <person name="Carrera A.J."/>
            <person name="Creasy T.H."/>
            <person name="Goodman H.M."/>
            <person name="Somerville C.R."/>
            <person name="Copenhaver G.P."/>
            <person name="Preuss D."/>
            <person name="Nierman W.C."/>
            <person name="White O."/>
            <person name="Eisen J.A."/>
            <person name="Salzberg S.L."/>
            <person name="Fraser C.M."/>
            <person name="Venter J.C."/>
        </authorList>
    </citation>
    <scope>NUCLEOTIDE SEQUENCE [LARGE SCALE GENOMIC DNA]</scope>
    <source>
        <strain>cv. Columbia</strain>
    </source>
</reference>
<reference key="3">
    <citation type="journal article" date="2017" name="Plant J.">
        <title>Araport11: a complete reannotation of the Arabidopsis thaliana reference genome.</title>
        <authorList>
            <person name="Cheng C.Y."/>
            <person name="Krishnakumar V."/>
            <person name="Chan A.P."/>
            <person name="Thibaud-Nissen F."/>
            <person name="Schobel S."/>
            <person name="Town C.D."/>
        </authorList>
    </citation>
    <scope>GENOME REANNOTATION</scope>
    <source>
        <strain>cv. Columbia</strain>
    </source>
</reference>
<reference key="4">
    <citation type="submission" date="2006-06" db="EMBL/GenBank/DDBJ databases">
        <title>Arabidopsis ORF clones.</title>
        <authorList>
            <person name="Shinn P."/>
            <person name="Chen H."/>
            <person name="Kim C.J."/>
            <person name="Quinitio C."/>
            <person name="Ecker J.R."/>
        </authorList>
    </citation>
    <scope>NUCLEOTIDE SEQUENCE [LARGE SCALE MRNA]</scope>
    <source>
        <strain>cv. Columbia</strain>
    </source>
</reference>
<reference key="5">
    <citation type="submission" date="2002-03" db="EMBL/GenBank/DDBJ databases">
        <title>Full-length cDNA from Arabidopsis thaliana.</title>
        <authorList>
            <person name="Brover V.V."/>
            <person name="Troukhan M.E."/>
            <person name="Alexandrov N.A."/>
            <person name="Lu Y.-P."/>
            <person name="Flavell R.B."/>
            <person name="Feldmann K.A."/>
        </authorList>
    </citation>
    <scope>NUCLEOTIDE SEQUENCE [LARGE SCALE MRNA]</scope>
</reference>
<comment type="function">
    <text evidence="1">The pyruvate dehydrogenase complex catalyzes the overall conversion of pyruvate to acetyl-CoA and CO(2). It contains multiple copies of three enzymatic components: pyruvate dehydrogenase (E1), dihydrolipoamide acetyltransferase (E2) and lipoamide dehydrogenase (E3) (By similarity).</text>
</comment>
<comment type="catalytic activity">
    <reaction>
        <text>N(6)-[(R)-lipoyl]-L-lysyl-[protein] + pyruvate + H(+) = N(6)-[(R)-S(8)-acetyldihydrolipoyl]-L-lysyl-[protein] + CO2</text>
        <dbReference type="Rhea" id="RHEA:19189"/>
        <dbReference type="Rhea" id="RHEA-COMP:10474"/>
        <dbReference type="Rhea" id="RHEA-COMP:10478"/>
        <dbReference type="ChEBI" id="CHEBI:15361"/>
        <dbReference type="ChEBI" id="CHEBI:15378"/>
        <dbReference type="ChEBI" id="CHEBI:16526"/>
        <dbReference type="ChEBI" id="CHEBI:83099"/>
        <dbReference type="ChEBI" id="CHEBI:83111"/>
        <dbReference type="EC" id="1.2.4.1"/>
    </reaction>
</comment>
<comment type="cofactor">
    <cofactor evidence="2">
        <name>thiamine diphosphate</name>
        <dbReference type="ChEBI" id="CHEBI:58937"/>
    </cofactor>
</comment>
<comment type="subunit">
    <text evidence="1">Tetramer of 2 alpha and 2 beta subunits.</text>
</comment>
<comment type="interaction">
    <interactant intactId="EBI-25520038">
        <id>O64688</id>
    </interactant>
    <interactant intactId="EBI-963686">
        <id>Q9LYC1</id>
        <label>GID1B</label>
    </interactant>
    <organismsDiffer>false</organismsDiffer>
    <experiments>3</experiments>
</comment>
<comment type="interaction">
    <interactant intactId="EBI-25520038">
        <id>O64688</id>
    </interactant>
    <interactant intactId="EBI-4426557">
        <id>Q84MB2</id>
        <label>TIFY8</label>
    </interactant>
    <organismsDiffer>false</organismsDiffer>
    <experiments>3</experiments>
</comment>
<comment type="subcellular location">
    <subcellularLocation>
        <location evidence="4">Plastid</location>
        <location evidence="4">Chloroplast</location>
    </subcellularLocation>
</comment>